<evidence type="ECO:0000250" key="1">
    <source>
        <dbReference type="UniProtKB" id="Q9H9J2"/>
    </source>
</evidence>
<evidence type="ECO:0000255" key="2"/>
<evidence type="ECO:0000305" key="3"/>
<dbReference type="EC" id="3.1.26.-"/>
<dbReference type="EMBL" id="BC112531">
    <property type="protein sequence ID" value="AAI12532.1"/>
    <property type="molecule type" value="mRNA"/>
</dbReference>
<dbReference type="RefSeq" id="NP_001039786.1">
    <property type="nucleotide sequence ID" value="NM_001046321.2"/>
</dbReference>
<dbReference type="SMR" id="Q2KIS2"/>
<dbReference type="FunCoup" id="Q2KIS2">
    <property type="interactions" value="1598"/>
</dbReference>
<dbReference type="STRING" id="9913.ENSBTAP00000015301"/>
<dbReference type="PaxDb" id="9913-ENSBTAP00000015301"/>
<dbReference type="GeneID" id="532389"/>
<dbReference type="KEGG" id="bta:532389"/>
<dbReference type="CTD" id="65080"/>
<dbReference type="eggNOG" id="KOG3769">
    <property type="taxonomic scope" value="Eukaryota"/>
</dbReference>
<dbReference type="HOGENOM" id="CLU_058895_0_0_1"/>
<dbReference type="InParanoid" id="Q2KIS2"/>
<dbReference type="OrthoDB" id="444135at2759"/>
<dbReference type="TreeFam" id="TF324185"/>
<dbReference type="Proteomes" id="UP000009136">
    <property type="component" value="Unplaced"/>
</dbReference>
<dbReference type="GO" id="GO:0005743">
    <property type="term" value="C:mitochondrial inner membrane"/>
    <property type="evidence" value="ECO:0000304"/>
    <property type="project" value="Reactome"/>
</dbReference>
<dbReference type="GO" id="GO:0005762">
    <property type="term" value="C:mitochondrial large ribosomal subunit"/>
    <property type="evidence" value="ECO:0000250"/>
    <property type="project" value="UniProtKB"/>
</dbReference>
<dbReference type="GO" id="GO:0005634">
    <property type="term" value="C:nucleus"/>
    <property type="evidence" value="ECO:0000318"/>
    <property type="project" value="GO_Central"/>
</dbReference>
<dbReference type="GO" id="GO:0003725">
    <property type="term" value="F:double-stranded RNA binding"/>
    <property type="evidence" value="ECO:0007669"/>
    <property type="project" value="InterPro"/>
</dbReference>
<dbReference type="GO" id="GO:0004525">
    <property type="term" value="F:ribonuclease III activity"/>
    <property type="evidence" value="ECO:0007669"/>
    <property type="project" value="InterPro"/>
</dbReference>
<dbReference type="GO" id="GO:0070125">
    <property type="term" value="P:mitochondrial translational elongation"/>
    <property type="evidence" value="ECO:0000250"/>
    <property type="project" value="UniProtKB"/>
</dbReference>
<dbReference type="GO" id="GO:0006396">
    <property type="term" value="P:RNA processing"/>
    <property type="evidence" value="ECO:0007669"/>
    <property type="project" value="InterPro"/>
</dbReference>
<dbReference type="CDD" id="cd19874">
    <property type="entry name" value="DSRM_MRPL44"/>
    <property type="match status" value="1"/>
</dbReference>
<dbReference type="FunFam" id="1.10.1520.10:FF:000010">
    <property type="entry name" value="39S ribosomal protein L44, mitochondrial"/>
    <property type="match status" value="1"/>
</dbReference>
<dbReference type="FunFam" id="3.30.160.20:FF:000037">
    <property type="entry name" value="39S ribosomal protein L44, mitochondrial"/>
    <property type="match status" value="1"/>
</dbReference>
<dbReference type="Gene3D" id="3.30.160.20">
    <property type="match status" value="1"/>
</dbReference>
<dbReference type="Gene3D" id="1.10.1520.10">
    <property type="entry name" value="Ribonuclease III domain"/>
    <property type="match status" value="1"/>
</dbReference>
<dbReference type="InterPro" id="IPR044444">
    <property type="entry name" value="Ribosomal_mL44_DSRM_metazoa"/>
</dbReference>
<dbReference type="InterPro" id="IPR055189">
    <property type="entry name" value="RM44_endonuclase"/>
</dbReference>
<dbReference type="InterPro" id="IPR036389">
    <property type="entry name" value="RNase_III_sf"/>
</dbReference>
<dbReference type="PANTHER" id="PTHR11207:SF5">
    <property type="entry name" value="LARGE RIBOSOMAL SUBUNIT PROTEIN ML44"/>
    <property type="match status" value="1"/>
</dbReference>
<dbReference type="PANTHER" id="PTHR11207">
    <property type="entry name" value="RIBONUCLEASE III"/>
    <property type="match status" value="1"/>
</dbReference>
<dbReference type="Pfam" id="PF22892">
    <property type="entry name" value="DSRM_MRPL44"/>
    <property type="match status" value="1"/>
</dbReference>
<dbReference type="Pfam" id="PF22935">
    <property type="entry name" value="RM44_endonuclase"/>
    <property type="match status" value="1"/>
</dbReference>
<dbReference type="SUPFAM" id="SSF54768">
    <property type="entry name" value="dsRNA-binding domain-like"/>
    <property type="match status" value="1"/>
</dbReference>
<dbReference type="SUPFAM" id="SSF69065">
    <property type="entry name" value="RNase III domain-like"/>
    <property type="match status" value="1"/>
</dbReference>
<proteinExistence type="evidence at transcript level"/>
<reference key="1">
    <citation type="submission" date="2006-01" db="EMBL/GenBank/DDBJ databases">
        <authorList>
            <consortium name="NIH - Mammalian Gene Collection (MGC) project"/>
        </authorList>
    </citation>
    <scope>NUCLEOTIDE SEQUENCE [LARGE SCALE MRNA]</scope>
    <source>
        <strain>Hereford</strain>
        <tissue>Testis</tissue>
    </source>
</reference>
<protein>
    <recommendedName>
        <fullName evidence="3">Large ribosomal subunit protein mL44</fullName>
        <ecNumber>3.1.26.-</ecNumber>
    </recommendedName>
    <alternativeName>
        <fullName>39S ribosomal protein L44, mitochondrial</fullName>
        <shortName>L44mt</shortName>
        <shortName>MRP-L44</shortName>
    </alternativeName>
</protein>
<gene>
    <name type="primary">MRPL44</name>
</gene>
<accession>Q2KIS2</accession>
<keyword id="KW-0255">Endonuclease</keyword>
<keyword id="KW-0378">Hydrolase</keyword>
<keyword id="KW-0496">Mitochondrion</keyword>
<keyword id="KW-0540">Nuclease</keyword>
<keyword id="KW-1185">Reference proteome</keyword>
<keyword id="KW-0687">Ribonucleoprotein</keyword>
<keyword id="KW-0689">Ribosomal protein</keyword>
<keyword id="KW-0694">RNA-binding</keyword>
<keyword id="KW-0809">Transit peptide</keyword>
<sequence>MASGLTRLLLRGPRCLLATAGLTLIPPVRGVKKGFRAAFRFQKELERWRLLRCPPPPVRRSEKPNWDYHAEIQAFGPRLQETFSLDLLKTAFVNSCYIKSEEAKRQKLGIEKEAVLLNLKDNQELSEQGTSFSQTCLTQFFEDAFPDLPTEGVKSLVDYLTGEEVVCHVARNLAVEQLTLSADFPVPPAVLRQTFFAVIGALLHSSGPERTSLFIRDFLITQMTGKELFEIWKIINPMGLLVQELKKRNISVPESRLTRQSGSTTALPVYFVGLYCDKKLIAEGPGETVLVAEEEAARVALRKLYGFTENRQPWDYSRPKEPVRAEKTIAAS</sequence>
<comment type="function">
    <text evidence="1">Component of the 39S subunit of mitochondrial ribosome. May have a function in the assembly/stability of nascent mitochondrial polypeptides exiting the ribosome.</text>
</comment>
<comment type="subunit">
    <text evidence="1">Component of the mitochondrial ribosome large subunit (39S) which comprises a 16S rRNA and about 50 distinct proteins.</text>
</comment>
<comment type="subcellular location">
    <subcellularLocation>
        <location evidence="1">Mitochondrion</location>
    </subcellularLocation>
</comment>
<comment type="similarity">
    <text evidence="3">Belongs to the ribonuclease III family. Mitochondrion-specific ribosomal protein mL44 subfamily.</text>
</comment>
<organism>
    <name type="scientific">Bos taurus</name>
    <name type="common">Bovine</name>
    <dbReference type="NCBI Taxonomy" id="9913"/>
    <lineage>
        <taxon>Eukaryota</taxon>
        <taxon>Metazoa</taxon>
        <taxon>Chordata</taxon>
        <taxon>Craniata</taxon>
        <taxon>Vertebrata</taxon>
        <taxon>Euteleostomi</taxon>
        <taxon>Mammalia</taxon>
        <taxon>Eutheria</taxon>
        <taxon>Laurasiatheria</taxon>
        <taxon>Artiodactyla</taxon>
        <taxon>Ruminantia</taxon>
        <taxon>Pecora</taxon>
        <taxon>Bovidae</taxon>
        <taxon>Bovinae</taxon>
        <taxon>Bos</taxon>
    </lineage>
</organism>
<name>RM44_BOVIN</name>
<feature type="transit peptide" description="Mitochondrion" evidence="2">
    <location>
        <begin position="1"/>
        <end position="30"/>
    </location>
</feature>
<feature type="chain" id="PRO_0000253620" description="Large ribosomal subunit protein mL44">
    <location>
        <begin position="31"/>
        <end position="332"/>
    </location>
</feature>
<feature type="domain" description="RNase III">
    <location>
        <begin position="86"/>
        <end position="228"/>
    </location>
</feature>
<feature type="domain" description="DRBM">
    <location>
        <begin position="236"/>
        <end position="306"/>
    </location>
</feature>